<evidence type="ECO:0000255" key="1">
    <source>
        <dbReference type="HAMAP-Rule" id="MF_01333"/>
    </source>
</evidence>
<evidence type="ECO:0000305" key="2"/>
<protein>
    <recommendedName>
        <fullName evidence="1">Large ribosomal subunit protein uL5</fullName>
    </recommendedName>
    <alternativeName>
        <fullName evidence="2">50S ribosomal protein L5</fullName>
    </alternativeName>
</protein>
<feature type="chain" id="PRO_1000052700" description="Large ribosomal subunit protein uL5">
    <location>
        <begin position="1"/>
        <end position="179"/>
    </location>
</feature>
<sequence>MSRLYLYYKNKVIPNLIKKFNYSSIMAVPQIIKITLNMGIGKSIINKKILDYAIDDLTKISGQKPIITIAKKSIASFKIRKGYPIGCKVTLRGRRKWDFFDKLITIVIPRIRDFRGMSRKSFDGRGNYSLGIREQIIFPEINYEKIDSIRGMDITITTNSKSNQEGECLLTEFDFPFQK</sequence>
<accession>Q057B6</accession>
<comment type="function">
    <text evidence="1">This is one of the proteins that bind and probably mediate the attachment of the 5S RNA into the large ribosomal subunit, where it forms part of the central protuberance. In the 70S ribosome it contacts protein S13 of the 30S subunit (bridge B1b), connecting the 2 subunits; this bridge is implicated in subunit movement. Contacts the P site tRNA; the 5S rRNA and some of its associated proteins might help stabilize positioning of ribosome-bound tRNAs.</text>
</comment>
<comment type="subunit">
    <text evidence="1">Part of the 50S ribosomal subunit; part of the 5S rRNA/L5/L18/L25 subcomplex. Contacts the 5S rRNA and the P site tRNA. Forms a bridge to the 30S subunit in the 70S ribosome.</text>
</comment>
<comment type="similarity">
    <text evidence="1">Belongs to the universal ribosomal protein uL5 family.</text>
</comment>
<proteinExistence type="inferred from homology"/>
<organism>
    <name type="scientific">Buchnera aphidicola subsp. Cinara cedri (strain Cc)</name>
    <dbReference type="NCBI Taxonomy" id="372461"/>
    <lineage>
        <taxon>Bacteria</taxon>
        <taxon>Pseudomonadati</taxon>
        <taxon>Pseudomonadota</taxon>
        <taxon>Gammaproteobacteria</taxon>
        <taxon>Enterobacterales</taxon>
        <taxon>Erwiniaceae</taxon>
        <taxon>Buchnera</taxon>
    </lineage>
</organism>
<name>RL5_BUCCC</name>
<reference key="1">
    <citation type="journal article" date="2006" name="Science">
        <title>A small microbial genome: the end of a long symbiotic relationship?</title>
        <authorList>
            <person name="Perez-Brocal V."/>
            <person name="Gil R."/>
            <person name="Ramos S."/>
            <person name="Lamelas A."/>
            <person name="Postigo M."/>
            <person name="Michelena J.M."/>
            <person name="Silva F.J."/>
            <person name="Moya A."/>
            <person name="Latorre A."/>
        </authorList>
    </citation>
    <scope>NUCLEOTIDE SEQUENCE [LARGE SCALE GENOMIC DNA]</scope>
    <source>
        <strain>Cc</strain>
    </source>
</reference>
<dbReference type="EMBL" id="CP000263">
    <property type="protein sequence ID" value="ABJ90783.1"/>
    <property type="molecule type" value="Genomic_DNA"/>
</dbReference>
<dbReference type="RefSeq" id="WP_011672702.1">
    <property type="nucleotide sequence ID" value="NC_008513.1"/>
</dbReference>
<dbReference type="SMR" id="Q057B6"/>
<dbReference type="STRING" id="372461.BCc_329"/>
<dbReference type="KEGG" id="bcc:BCc_329"/>
<dbReference type="eggNOG" id="COG0094">
    <property type="taxonomic scope" value="Bacteria"/>
</dbReference>
<dbReference type="HOGENOM" id="CLU_061015_2_1_6"/>
<dbReference type="OrthoDB" id="9806626at2"/>
<dbReference type="Proteomes" id="UP000000669">
    <property type="component" value="Chromosome"/>
</dbReference>
<dbReference type="GO" id="GO:1990904">
    <property type="term" value="C:ribonucleoprotein complex"/>
    <property type="evidence" value="ECO:0007669"/>
    <property type="project" value="UniProtKB-KW"/>
</dbReference>
<dbReference type="GO" id="GO:0005840">
    <property type="term" value="C:ribosome"/>
    <property type="evidence" value="ECO:0007669"/>
    <property type="project" value="UniProtKB-KW"/>
</dbReference>
<dbReference type="GO" id="GO:0019843">
    <property type="term" value="F:rRNA binding"/>
    <property type="evidence" value="ECO:0007669"/>
    <property type="project" value="UniProtKB-UniRule"/>
</dbReference>
<dbReference type="GO" id="GO:0003735">
    <property type="term" value="F:structural constituent of ribosome"/>
    <property type="evidence" value="ECO:0007669"/>
    <property type="project" value="InterPro"/>
</dbReference>
<dbReference type="GO" id="GO:0000049">
    <property type="term" value="F:tRNA binding"/>
    <property type="evidence" value="ECO:0007669"/>
    <property type="project" value="UniProtKB-UniRule"/>
</dbReference>
<dbReference type="GO" id="GO:0006412">
    <property type="term" value="P:translation"/>
    <property type="evidence" value="ECO:0007669"/>
    <property type="project" value="UniProtKB-UniRule"/>
</dbReference>
<dbReference type="FunFam" id="3.30.1440.10:FF:000001">
    <property type="entry name" value="50S ribosomal protein L5"/>
    <property type="match status" value="1"/>
</dbReference>
<dbReference type="Gene3D" id="3.30.1440.10">
    <property type="match status" value="1"/>
</dbReference>
<dbReference type="HAMAP" id="MF_01333_B">
    <property type="entry name" value="Ribosomal_uL5_B"/>
    <property type="match status" value="1"/>
</dbReference>
<dbReference type="InterPro" id="IPR002132">
    <property type="entry name" value="Ribosomal_uL5"/>
</dbReference>
<dbReference type="InterPro" id="IPR020930">
    <property type="entry name" value="Ribosomal_uL5_bac-type"/>
</dbReference>
<dbReference type="InterPro" id="IPR031309">
    <property type="entry name" value="Ribosomal_uL5_C"/>
</dbReference>
<dbReference type="InterPro" id="IPR020929">
    <property type="entry name" value="Ribosomal_uL5_CS"/>
</dbReference>
<dbReference type="InterPro" id="IPR022803">
    <property type="entry name" value="Ribosomal_uL5_dom_sf"/>
</dbReference>
<dbReference type="InterPro" id="IPR031310">
    <property type="entry name" value="Ribosomal_uL5_N"/>
</dbReference>
<dbReference type="NCBIfam" id="NF000585">
    <property type="entry name" value="PRK00010.1"/>
    <property type="match status" value="1"/>
</dbReference>
<dbReference type="PANTHER" id="PTHR11994">
    <property type="entry name" value="60S RIBOSOMAL PROTEIN L11-RELATED"/>
    <property type="match status" value="1"/>
</dbReference>
<dbReference type="Pfam" id="PF00281">
    <property type="entry name" value="Ribosomal_L5"/>
    <property type="match status" value="1"/>
</dbReference>
<dbReference type="Pfam" id="PF00673">
    <property type="entry name" value="Ribosomal_L5_C"/>
    <property type="match status" value="1"/>
</dbReference>
<dbReference type="PIRSF" id="PIRSF002161">
    <property type="entry name" value="Ribosomal_L5"/>
    <property type="match status" value="1"/>
</dbReference>
<dbReference type="SUPFAM" id="SSF55282">
    <property type="entry name" value="RL5-like"/>
    <property type="match status" value="1"/>
</dbReference>
<dbReference type="PROSITE" id="PS00358">
    <property type="entry name" value="RIBOSOMAL_L5"/>
    <property type="match status" value="1"/>
</dbReference>
<gene>
    <name evidence="1" type="primary">rplE</name>
    <name type="ordered locus">BCc_329</name>
</gene>
<keyword id="KW-1185">Reference proteome</keyword>
<keyword id="KW-0687">Ribonucleoprotein</keyword>
<keyword id="KW-0689">Ribosomal protein</keyword>
<keyword id="KW-0694">RNA-binding</keyword>
<keyword id="KW-0699">rRNA-binding</keyword>
<keyword id="KW-0820">tRNA-binding</keyword>